<reference key="1">
    <citation type="journal article" date="2006" name="Science">
        <title>A small microbial genome: the end of a long symbiotic relationship?</title>
        <authorList>
            <person name="Perez-Brocal V."/>
            <person name="Gil R."/>
            <person name="Ramos S."/>
            <person name="Lamelas A."/>
            <person name="Postigo M."/>
            <person name="Michelena J.M."/>
            <person name="Silva F.J."/>
            <person name="Moya A."/>
            <person name="Latorre A."/>
        </authorList>
    </citation>
    <scope>NUCLEOTIDE SEQUENCE [LARGE SCALE GENOMIC DNA]</scope>
    <source>
        <strain>Cc</strain>
    </source>
</reference>
<accession>Q058E2</accession>
<gene>
    <name evidence="1" type="primary">rplA</name>
    <name type="ordered locus">BCc_022</name>
</gene>
<organism>
    <name type="scientific">Buchnera aphidicola subsp. Cinara cedri (strain Cc)</name>
    <dbReference type="NCBI Taxonomy" id="372461"/>
    <lineage>
        <taxon>Bacteria</taxon>
        <taxon>Pseudomonadati</taxon>
        <taxon>Pseudomonadota</taxon>
        <taxon>Gammaproteobacteria</taxon>
        <taxon>Enterobacterales</taxon>
        <taxon>Erwiniaceae</taxon>
        <taxon>Buchnera</taxon>
    </lineage>
</organism>
<comment type="function">
    <text evidence="1">Binds directly to 23S rRNA. The L1 stalk is quite mobile in the ribosome, and is involved in E site tRNA release.</text>
</comment>
<comment type="function">
    <text evidence="1">Protein L1 is also a translational repressor protein, it controls the translation of the L11 operon by binding to its mRNA.</text>
</comment>
<comment type="subunit">
    <text evidence="1">Part of the 50S ribosomal subunit.</text>
</comment>
<comment type="similarity">
    <text evidence="1">Belongs to the universal ribosomal protein uL1 family.</text>
</comment>
<proteinExistence type="inferred from homology"/>
<name>RL1_BUCCC</name>
<dbReference type="EMBL" id="CP000263">
    <property type="protein sequence ID" value="ABJ90507.1"/>
    <property type="molecule type" value="Genomic_DNA"/>
</dbReference>
<dbReference type="RefSeq" id="WP_011672426.1">
    <property type="nucleotide sequence ID" value="NC_008513.1"/>
</dbReference>
<dbReference type="SMR" id="Q058E2"/>
<dbReference type="STRING" id="372461.BCc_022"/>
<dbReference type="KEGG" id="bcc:BCc_022"/>
<dbReference type="eggNOG" id="COG0081">
    <property type="taxonomic scope" value="Bacteria"/>
</dbReference>
<dbReference type="HOGENOM" id="CLU_062853_0_0_6"/>
<dbReference type="OrthoDB" id="9803740at2"/>
<dbReference type="Proteomes" id="UP000000669">
    <property type="component" value="Chromosome"/>
</dbReference>
<dbReference type="GO" id="GO:0022625">
    <property type="term" value="C:cytosolic large ribosomal subunit"/>
    <property type="evidence" value="ECO:0007669"/>
    <property type="project" value="TreeGrafter"/>
</dbReference>
<dbReference type="GO" id="GO:0019843">
    <property type="term" value="F:rRNA binding"/>
    <property type="evidence" value="ECO:0007669"/>
    <property type="project" value="UniProtKB-UniRule"/>
</dbReference>
<dbReference type="GO" id="GO:0003735">
    <property type="term" value="F:structural constituent of ribosome"/>
    <property type="evidence" value="ECO:0007669"/>
    <property type="project" value="InterPro"/>
</dbReference>
<dbReference type="GO" id="GO:0000049">
    <property type="term" value="F:tRNA binding"/>
    <property type="evidence" value="ECO:0007669"/>
    <property type="project" value="UniProtKB-KW"/>
</dbReference>
<dbReference type="GO" id="GO:0006417">
    <property type="term" value="P:regulation of translation"/>
    <property type="evidence" value="ECO:0007669"/>
    <property type="project" value="UniProtKB-KW"/>
</dbReference>
<dbReference type="GO" id="GO:0006412">
    <property type="term" value="P:translation"/>
    <property type="evidence" value="ECO:0007669"/>
    <property type="project" value="UniProtKB-UniRule"/>
</dbReference>
<dbReference type="CDD" id="cd00403">
    <property type="entry name" value="Ribosomal_L1"/>
    <property type="match status" value="1"/>
</dbReference>
<dbReference type="FunFam" id="3.40.50.790:FF:000001">
    <property type="entry name" value="50S ribosomal protein L1"/>
    <property type="match status" value="1"/>
</dbReference>
<dbReference type="Gene3D" id="3.30.190.20">
    <property type="match status" value="1"/>
</dbReference>
<dbReference type="Gene3D" id="3.40.50.790">
    <property type="match status" value="1"/>
</dbReference>
<dbReference type="HAMAP" id="MF_01318_B">
    <property type="entry name" value="Ribosomal_uL1_B"/>
    <property type="match status" value="1"/>
</dbReference>
<dbReference type="InterPro" id="IPR005878">
    <property type="entry name" value="Ribosom_uL1_bac-type"/>
</dbReference>
<dbReference type="InterPro" id="IPR002143">
    <property type="entry name" value="Ribosomal_uL1"/>
</dbReference>
<dbReference type="InterPro" id="IPR023674">
    <property type="entry name" value="Ribosomal_uL1-like"/>
</dbReference>
<dbReference type="InterPro" id="IPR028364">
    <property type="entry name" value="Ribosomal_uL1/biogenesis"/>
</dbReference>
<dbReference type="InterPro" id="IPR016095">
    <property type="entry name" value="Ribosomal_uL1_3-a/b-sand"/>
</dbReference>
<dbReference type="InterPro" id="IPR023673">
    <property type="entry name" value="Ribosomal_uL1_CS"/>
</dbReference>
<dbReference type="NCBIfam" id="TIGR01169">
    <property type="entry name" value="rplA_bact"/>
    <property type="match status" value="1"/>
</dbReference>
<dbReference type="PANTHER" id="PTHR36427">
    <property type="entry name" value="54S RIBOSOMAL PROTEIN L1, MITOCHONDRIAL"/>
    <property type="match status" value="1"/>
</dbReference>
<dbReference type="PANTHER" id="PTHR36427:SF3">
    <property type="entry name" value="LARGE RIBOSOMAL SUBUNIT PROTEIN UL1M"/>
    <property type="match status" value="1"/>
</dbReference>
<dbReference type="Pfam" id="PF00687">
    <property type="entry name" value="Ribosomal_L1"/>
    <property type="match status" value="1"/>
</dbReference>
<dbReference type="PIRSF" id="PIRSF002155">
    <property type="entry name" value="Ribosomal_L1"/>
    <property type="match status" value="1"/>
</dbReference>
<dbReference type="SUPFAM" id="SSF56808">
    <property type="entry name" value="Ribosomal protein L1"/>
    <property type="match status" value="1"/>
</dbReference>
<dbReference type="PROSITE" id="PS01199">
    <property type="entry name" value="RIBOSOMAL_L1"/>
    <property type="match status" value="1"/>
</dbReference>
<feature type="chain" id="PRO_0000307970" description="Large ribosomal subunit protein uL1">
    <location>
        <begin position="1"/>
        <end position="226"/>
    </location>
</feature>
<protein>
    <recommendedName>
        <fullName evidence="1">Large ribosomal subunit protein uL1</fullName>
    </recommendedName>
    <alternativeName>
        <fullName evidence="2">50S ribosomal protein L1</fullName>
    </alternativeName>
</protein>
<sequence>MKKKKKNYTFNKKNKKIYNIKEAIQLLKNKKSAKFIESIDAAFNLNIDPKKSEQNVRGSVLLPHGTGNTIKIAVFTTGKNIKIAQLAGADYVGLEDLANLITNQKKKIDLVIASPETMHIVGKLGPILGPKGIMPNPKFGTITKDIKKAIQEAKKGKINYRNDKNGIIHSNFGKINFSEKELYENFLTLYQDIKKSQPNQFKGIYYKKINISTTMGPGIIIDHLSL</sequence>
<evidence type="ECO:0000255" key="1">
    <source>
        <dbReference type="HAMAP-Rule" id="MF_01318"/>
    </source>
</evidence>
<evidence type="ECO:0000305" key="2"/>
<keyword id="KW-1185">Reference proteome</keyword>
<keyword id="KW-0678">Repressor</keyword>
<keyword id="KW-0687">Ribonucleoprotein</keyword>
<keyword id="KW-0689">Ribosomal protein</keyword>
<keyword id="KW-0694">RNA-binding</keyword>
<keyword id="KW-0699">rRNA-binding</keyword>
<keyword id="KW-0810">Translation regulation</keyword>
<keyword id="KW-0820">tRNA-binding</keyword>